<organism>
    <name type="scientific">Chlorocebus aethiops</name>
    <name type="common">Green monkey</name>
    <name type="synonym">Cercopithecus aethiops</name>
    <dbReference type="NCBI Taxonomy" id="9534"/>
    <lineage>
        <taxon>Eukaryota</taxon>
        <taxon>Metazoa</taxon>
        <taxon>Chordata</taxon>
        <taxon>Craniata</taxon>
        <taxon>Vertebrata</taxon>
        <taxon>Euteleostomi</taxon>
        <taxon>Mammalia</taxon>
        <taxon>Eutheria</taxon>
        <taxon>Euarchontoglires</taxon>
        <taxon>Primates</taxon>
        <taxon>Haplorrhini</taxon>
        <taxon>Catarrhini</taxon>
        <taxon>Cercopithecidae</taxon>
        <taxon>Cercopithecinae</taxon>
        <taxon>Chlorocebus</taxon>
    </lineage>
</organism>
<feature type="chain" id="PRO_0000084234" description="Insulin receptor substrate 1">
    <location>
        <begin position="1"/>
        <end position="1251"/>
    </location>
</feature>
<feature type="domain" description="PH" evidence="5">
    <location>
        <begin position="12"/>
        <end position="115"/>
    </location>
</feature>
<feature type="domain" description="IRS-type PTB" evidence="6">
    <location>
        <begin position="160"/>
        <end position="264"/>
    </location>
</feature>
<feature type="region of interest" description="Mediates interaction with PHIP" evidence="1">
    <location>
        <begin position="3"/>
        <end position="137"/>
    </location>
</feature>
<feature type="region of interest" description="Disordered" evidence="7">
    <location>
        <begin position="262"/>
        <end position="430"/>
    </location>
</feature>
<feature type="region of interest" description="Disordered" evidence="7">
    <location>
        <begin position="494"/>
        <end position="513"/>
    </location>
</feature>
<feature type="region of interest" description="Disordered" evidence="7">
    <location>
        <begin position="594"/>
        <end position="616"/>
    </location>
</feature>
<feature type="region of interest" description="Disordered" evidence="7">
    <location>
        <begin position="668"/>
        <end position="692"/>
    </location>
</feature>
<feature type="region of interest" description="Disordered" evidence="7">
    <location>
        <begin position="734"/>
        <end position="753"/>
    </location>
</feature>
<feature type="region of interest" description="Disordered" evidence="7">
    <location>
        <begin position="769"/>
        <end position="946"/>
    </location>
</feature>
<feature type="region of interest" description="GRB2-binding" evidence="1">
    <location>
        <begin position="905"/>
        <end position="907"/>
    </location>
</feature>
<feature type="region of interest" description="Disordered" evidence="7">
    <location>
        <begin position="1091"/>
        <end position="1124"/>
    </location>
</feature>
<feature type="region of interest" description="Disordered" evidence="7">
    <location>
        <begin position="1130"/>
        <end position="1149"/>
    </location>
</feature>
<feature type="region of interest" description="Disordered" evidence="7">
    <location>
        <begin position="1195"/>
        <end position="1251"/>
    </location>
</feature>
<feature type="short sequence motif" description="YXXM motif 1">
    <location>
        <begin position="465"/>
        <end position="468"/>
    </location>
</feature>
<feature type="short sequence motif" description="YXXM motif 2">
    <location>
        <begin position="551"/>
        <end position="554"/>
    </location>
</feature>
<feature type="short sequence motif" description="YXXM motif 3">
    <location>
        <begin position="612"/>
        <end position="615"/>
    </location>
</feature>
<feature type="short sequence motif" description="YXXM motif 4">
    <location>
        <begin position="632"/>
        <end position="635"/>
    </location>
</feature>
<feature type="short sequence motif" description="YXXM motif 5">
    <location>
        <begin position="662"/>
        <end position="665"/>
    </location>
</feature>
<feature type="short sequence motif" description="YXXM motif 6">
    <location>
        <begin position="730"/>
        <end position="733"/>
    </location>
</feature>
<feature type="short sequence motif" description="YXXM motif 7">
    <location>
        <begin position="950"/>
        <end position="953"/>
    </location>
</feature>
<feature type="short sequence motif" description="YXXM motif 8">
    <location>
        <begin position="998"/>
        <end position="1001"/>
    </location>
</feature>
<feature type="short sequence motif" description="YXXM motif 9">
    <location>
        <begin position="1021"/>
        <end position="1024"/>
    </location>
</feature>
<feature type="compositionally biased region" description="Low complexity" evidence="7">
    <location>
        <begin position="269"/>
        <end position="281"/>
    </location>
</feature>
<feature type="compositionally biased region" description="Basic residues" evidence="7">
    <location>
        <begin position="354"/>
        <end position="363"/>
    </location>
</feature>
<feature type="compositionally biased region" description="Low complexity" evidence="7">
    <location>
        <begin position="383"/>
        <end position="404"/>
    </location>
</feature>
<feature type="compositionally biased region" description="Low complexity" evidence="7">
    <location>
        <begin position="412"/>
        <end position="424"/>
    </location>
</feature>
<feature type="compositionally biased region" description="Basic and acidic residues" evidence="7">
    <location>
        <begin position="594"/>
        <end position="610"/>
    </location>
</feature>
<feature type="compositionally biased region" description="Basic and acidic residues" evidence="7">
    <location>
        <begin position="774"/>
        <end position="783"/>
    </location>
</feature>
<feature type="compositionally biased region" description="Low complexity" evidence="7">
    <location>
        <begin position="799"/>
        <end position="813"/>
    </location>
</feature>
<feature type="compositionally biased region" description="Low complexity" evidence="7">
    <location>
        <begin position="875"/>
        <end position="891"/>
    </location>
</feature>
<feature type="compositionally biased region" description="Polar residues" evidence="7">
    <location>
        <begin position="924"/>
        <end position="937"/>
    </location>
</feature>
<feature type="compositionally biased region" description="Polar residues" evidence="7">
    <location>
        <begin position="1111"/>
        <end position="1123"/>
    </location>
</feature>
<feature type="compositionally biased region" description="Pro residues" evidence="7">
    <location>
        <begin position="1207"/>
        <end position="1218"/>
    </location>
</feature>
<feature type="modified residue" description="Phosphoserine" evidence="4">
    <location>
        <position position="3"/>
    </location>
</feature>
<feature type="modified residue" description="Phosphoserine; by CK2" evidence="4">
    <location>
        <position position="99"/>
    </location>
</feature>
<feature type="modified residue" description="Phosphoserine" evidence="2">
    <location>
        <position position="270"/>
    </location>
</feature>
<feature type="modified residue" description="Phosphoserine; by RPS6KB1" evidence="2">
    <location>
        <position position="307"/>
    </location>
</feature>
<feature type="modified residue" description="Phosphoserine; by IKKB, MAPK8 and RPS6KB1" evidence="2">
    <location>
        <position position="312"/>
    </location>
</feature>
<feature type="modified residue" description="Phosphoserine" evidence="2">
    <location>
        <position position="323"/>
    </location>
</feature>
<feature type="modified residue" description="Phosphoserine" evidence="3">
    <location>
        <position position="330"/>
    </location>
</feature>
<feature type="modified residue" description="Phosphoserine" evidence="3">
    <location>
        <position position="345"/>
    </location>
</feature>
<feature type="modified residue" description="Phosphoserine" evidence="2">
    <location>
        <position position="348"/>
    </location>
</feature>
<feature type="modified residue" description="Phosphoserine" evidence="3">
    <location>
        <position position="419"/>
    </location>
</feature>
<feature type="modified residue" description="Phosphothreonine" evidence="4">
    <location>
        <position position="446"/>
    </location>
</feature>
<feature type="modified residue" description="Phosphothreonine" evidence="2">
    <location>
        <position position="453"/>
    </location>
</feature>
<feature type="modified residue" description="Phosphotyrosine; by INSR" evidence="4">
    <location>
        <position position="465"/>
    </location>
</feature>
<feature type="modified residue" description="Phosphoserine; by RPS6KB1" evidence="2">
    <location>
        <position position="527"/>
    </location>
</feature>
<feature type="modified residue" description="Phosphotyrosine; by INSR" evidence="4">
    <location>
        <position position="612"/>
    </location>
</feature>
<feature type="modified residue" description="Phosphoserine" evidence="2">
    <location>
        <position position="629"/>
    </location>
</feature>
<feature type="modified residue" description="Phosphotyrosine; by INSR" evidence="4">
    <location>
        <position position="632"/>
    </location>
</feature>
<feature type="modified residue" description="Phosphoserine; by RPS6KB1" evidence="3">
    <location>
        <position position="636"/>
    </location>
</feature>
<feature type="modified residue" description="Phosphotyrosine" evidence="2">
    <location>
        <position position="662"/>
    </location>
</feature>
<feature type="modified residue" description="Phosphoserine; by AMPK and SIK2" evidence="2">
    <location>
        <position position="792"/>
    </location>
</feature>
<feature type="modified residue" description="Phosphoserine" evidence="3">
    <location>
        <position position="901"/>
    </location>
</feature>
<feature type="modified residue" description="Phosphotyrosine; by INSR" evidence="4">
    <location>
        <position position="905"/>
    </location>
</feature>
<feature type="modified residue" description="Phosphotyrosine; by INSR" evidence="2">
    <location>
        <position position="950"/>
    </location>
</feature>
<feature type="modified residue" description="Phosphotyrosine; by INSR" evidence="4">
    <location>
        <position position="998"/>
    </location>
</feature>
<feature type="modified residue" description="Phosphoserine" evidence="3">
    <location>
        <position position="1109"/>
    </location>
</feature>
<feature type="modified residue" description="Phosphoserine" evidence="2">
    <location>
        <position position="1110"/>
    </location>
</feature>
<feature type="modified residue" description="Phosphotyrosine; by INSR" evidence="4">
    <location>
        <position position="1188"/>
    </location>
</feature>
<feature type="modified residue" description="Phosphotyrosine; by INSR" evidence="4">
    <location>
        <position position="1238"/>
    </location>
</feature>
<feature type="cross-link" description="Glycyl lysine isopeptide (Lys-Gly) (interchain with G-Cter in ubiquitin)" evidence="2">
    <location>
        <position position="1195"/>
    </location>
</feature>
<sequence length="1251" mass="133054">MASPPESDGFSDVRKVGYLRKPKSMHKRFFVLRAASETGDPARLEYYENEKKWRHKSSAPKRSIPLESCFNINKRADSKNKHLVALYTRDEHFAIAADSEAEQDSWYQALLQLHNRAKGHHDGAAALGAGGGGGSCSGSSGLGEAGEDLSYGDVPPGPAFKEVWQVILKPKGLGQTKNLIGIYRLCLTSKTISFVKLNSEAAAVVLQLMNIRRCGHSENFFFIEVGRSAVTGPGEFWMQVDDSVVAQNMHETILEAMRAMSDEFRPRSKSQSSSNCSNPISVPLRRHHLNNPPPSQVGLTRRSRTESITATSPASMVGGKPGSFRVRASSDGEGTMSRPASVDGSPVSPSTNRTHAHRHRGSARLHPPLNHSRSIPMPASRCSPSATSPVSLSSSSTSGHGSTSDCLFPRRSSASVSGSPSDGGFISSDEYGSSPCDFRSSFRSVTPDSLGHTPPARGEEELSNYICMGGKGPSTLTAPNGHYILSRGGNGHRYTPGTGLGTSPALAGDEASSAADLDNRFRKRTHSAGTSPTITHQKTPSQSSVASIEEYTEMMPAYPPGGGSGGRLPGHRHSAFVPTHSYPEEGLEMHPLERRGGHHRPDSSTLHTDDGYMPMSPGVAPVPSSRKGSGDYMPMSPKSVSAPQQIINPIRRHPQRVDPNGYMMMSPSGGCSPDIGGGPSSSSSSTVPSGSSYGKLWTKGVGAHNSQVLLHPKPPVESSGGKLLPCTGDYMNMSPVGDSNTSSPSDCYYGPEDPQHKPVLSYYSLPRSFKHTQRPGEPEEGARHQHLRLSTSSGRLLYAATADDSSSSTSSDSLGGGYCGARLEPSLPHPHHQVLQPHLPRKVDTAAQTNSRLARPTRLSLGDPKASTLPRAREQQQQQQQQQQQQQQQQQPLLHPPEPKSPGEYVNIEFGSDQPGYLSGPVASRSSPSVRCPSQLQPAPREEETGTEEYMKMDLGPGRRAAWQESTGVEMGRLGPAPPGAASICRPTRAVPSSRGDYMTMQMSCPRQSYVDTSPIAPVSYADMRTGIAAEEVSLPRATMAAAASSSAASASPTGPQGAAELAAHSSLLGGAQGPGGMSAFTRVNLSPNRNQSAKVIRADPQGCRRRHSSETFSSTPSATRVGNTVPFGAGAAIGGSGGSSSSSEDVKRHSSASFENVWLRPGELGGAPKEPAQLCGAAGGLENGLNYIDLDLVKDFKQRPQECTPQPQPPPPPPPHQPLGSSESSSTRRSSEDLSAYASISFQKQPEDLQ</sequence>
<reference key="1">
    <citation type="journal article" date="1995" name="Biochem. Biophys. Res. Commun.">
        <title>Cloning of a cDNA encoding a 190-kDa insulin receptor substrate-1-like protein of simian COS cells.</title>
        <authorList>
            <person name="Wang L."/>
            <person name="Hayashi H."/>
            <person name="Mitani Y."/>
            <person name="Ishii K."/>
            <person name="Ohnishi T."/>
            <person name="Niwa Y."/>
            <person name="Kido H."/>
            <person name="Ebina Y."/>
        </authorList>
    </citation>
    <scope>NUCLEOTIDE SEQUENCE [MRNA]</scope>
</reference>
<proteinExistence type="evidence at transcript level"/>
<protein>
    <recommendedName>
        <fullName>Insulin receptor substrate 1</fullName>
        <shortName>IRS-1</shortName>
    </recommendedName>
</protein>
<dbReference type="EMBL" id="D64157">
    <property type="protein sequence ID" value="BAA11026.1"/>
    <property type="molecule type" value="mRNA"/>
</dbReference>
<dbReference type="BMRB" id="Q28224"/>
<dbReference type="SMR" id="Q28224"/>
<dbReference type="IntAct" id="Q28224">
    <property type="interactions" value="1"/>
</dbReference>
<dbReference type="GO" id="GO:0005737">
    <property type="term" value="C:cytoplasm"/>
    <property type="evidence" value="ECO:0000250"/>
    <property type="project" value="UniProtKB"/>
</dbReference>
<dbReference type="GO" id="GO:0005829">
    <property type="term" value="C:cytosol"/>
    <property type="evidence" value="ECO:0007669"/>
    <property type="project" value="TreeGrafter"/>
</dbReference>
<dbReference type="GO" id="GO:0043231">
    <property type="term" value="C:intracellular membrane-bounded organelle"/>
    <property type="evidence" value="ECO:0000250"/>
    <property type="project" value="UniProtKB"/>
</dbReference>
<dbReference type="GO" id="GO:0005634">
    <property type="term" value="C:nucleus"/>
    <property type="evidence" value="ECO:0000250"/>
    <property type="project" value="UniProtKB"/>
</dbReference>
<dbReference type="GO" id="GO:0005886">
    <property type="term" value="C:plasma membrane"/>
    <property type="evidence" value="ECO:0007669"/>
    <property type="project" value="TreeGrafter"/>
</dbReference>
<dbReference type="GO" id="GO:0005158">
    <property type="term" value="F:insulin receptor binding"/>
    <property type="evidence" value="ECO:0000250"/>
    <property type="project" value="UniProtKB"/>
</dbReference>
<dbReference type="GO" id="GO:0005159">
    <property type="term" value="F:insulin-like growth factor receptor binding"/>
    <property type="evidence" value="ECO:0000250"/>
    <property type="project" value="UniProtKB"/>
</dbReference>
<dbReference type="GO" id="GO:0043548">
    <property type="term" value="F:phosphatidylinositol 3-kinase binding"/>
    <property type="evidence" value="ECO:0000250"/>
    <property type="project" value="UniProtKB"/>
</dbReference>
<dbReference type="GO" id="GO:0042169">
    <property type="term" value="F:SH2 domain binding"/>
    <property type="evidence" value="ECO:0000250"/>
    <property type="project" value="UniProtKB"/>
</dbReference>
<dbReference type="GO" id="GO:0008286">
    <property type="term" value="P:insulin receptor signaling pathway"/>
    <property type="evidence" value="ECO:0000250"/>
    <property type="project" value="UniProtKB"/>
</dbReference>
<dbReference type="GO" id="GO:0048009">
    <property type="term" value="P:insulin-like growth factor receptor signaling pathway"/>
    <property type="evidence" value="ECO:0000250"/>
    <property type="project" value="UniProtKB"/>
</dbReference>
<dbReference type="CDD" id="cd01257">
    <property type="entry name" value="PH_IRS"/>
    <property type="match status" value="1"/>
</dbReference>
<dbReference type="CDD" id="cd01204">
    <property type="entry name" value="PTB_IRS"/>
    <property type="match status" value="1"/>
</dbReference>
<dbReference type="FunFam" id="2.30.29.30:FF:000029">
    <property type="entry name" value="Insulin receptor substrate 1"/>
    <property type="match status" value="1"/>
</dbReference>
<dbReference type="FunFam" id="2.30.29.30:FF:000129">
    <property type="entry name" value="Insulin receptor substrate 1"/>
    <property type="match status" value="1"/>
</dbReference>
<dbReference type="Gene3D" id="2.30.29.30">
    <property type="entry name" value="Pleckstrin-homology domain (PH domain)/Phosphotyrosine-binding domain (PTB)"/>
    <property type="match status" value="2"/>
</dbReference>
<dbReference type="InterPro" id="IPR039011">
    <property type="entry name" value="IRS"/>
</dbReference>
<dbReference type="InterPro" id="IPR002404">
    <property type="entry name" value="IRS_PTB"/>
</dbReference>
<dbReference type="InterPro" id="IPR011993">
    <property type="entry name" value="PH-like_dom_sf"/>
</dbReference>
<dbReference type="InterPro" id="IPR001849">
    <property type="entry name" value="PH_domain"/>
</dbReference>
<dbReference type="PANTHER" id="PTHR10614">
    <property type="entry name" value="INSULIN RECEPTOR SUBSTRATE"/>
    <property type="match status" value="1"/>
</dbReference>
<dbReference type="PANTHER" id="PTHR10614:SF11">
    <property type="entry name" value="INSULIN RECEPTOR SUBSTRATE 1"/>
    <property type="match status" value="1"/>
</dbReference>
<dbReference type="Pfam" id="PF02174">
    <property type="entry name" value="IRS"/>
    <property type="match status" value="1"/>
</dbReference>
<dbReference type="Pfam" id="PF00169">
    <property type="entry name" value="PH"/>
    <property type="match status" value="1"/>
</dbReference>
<dbReference type="PRINTS" id="PR00628">
    <property type="entry name" value="INSULINRSI"/>
</dbReference>
<dbReference type="SMART" id="SM01244">
    <property type="entry name" value="IRS"/>
    <property type="match status" value="1"/>
</dbReference>
<dbReference type="SMART" id="SM00233">
    <property type="entry name" value="PH"/>
    <property type="match status" value="1"/>
</dbReference>
<dbReference type="SMART" id="SM00310">
    <property type="entry name" value="PTBI"/>
    <property type="match status" value="1"/>
</dbReference>
<dbReference type="SUPFAM" id="SSF50729">
    <property type="entry name" value="PH domain-like"/>
    <property type="match status" value="2"/>
</dbReference>
<dbReference type="PROSITE" id="PS51064">
    <property type="entry name" value="IRS_PTB"/>
    <property type="match status" value="1"/>
</dbReference>
<dbReference type="PROSITE" id="PS50003">
    <property type="entry name" value="PH_DOMAIN"/>
    <property type="match status" value="1"/>
</dbReference>
<evidence type="ECO:0000250" key="1"/>
<evidence type="ECO:0000250" key="2">
    <source>
        <dbReference type="UniProtKB" id="P35568"/>
    </source>
</evidence>
<evidence type="ECO:0000250" key="3">
    <source>
        <dbReference type="UniProtKB" id="P35569"/>
    </source>
</evidence>
<evidence type="ECO:0000250" key="4">
    <source>
        <dbReference type="UniProtKB" id="P35570"/>
    </source>
</evidence>
<evidence type="ECO:0000255" key="5">
    <source>
        <dbReference type="PROSITE-ProRule" id="PRU00145"/>
    </source>
</evidence>
<evidence type="ECO:0000255" key="6">
    <source>
        <dbReference type="PROSITE-ProRule" id="PRU00389"/>
    </source>
</evidence>
<evidence type="ECO:0000256" key="7">
    <source>
        <dbReference type="SAM" id="MobiDB-lite"/>
    </source>
</evidence>
<name>IRS1_CHLAE</name>
<accession>Q28224</accession>
<comment type="function">
    <text evidence="2 4">Signaling adapter protein that participates in the signal transduction from two prominent receptor tyrosine kinases, insulin receptor/INSR and insulin-like growth factor I receptor/IGF1R. Plays therefore an important role in development, growth, glucose homeostasis as well as lipid metabolism. Upon phosphorylation by the insulin receptor, functions as a signaling scaffold that propagates insulin action through binding to SH2 domain-containing proteins including the p85 regulatory subunit of PI3K, NCK1, NCK2, GRB2 or SHP2 (By similarity). Recruitment of GRB2 leads to the activation of the guanine nucleotide exchange factor SOS1 which in turn triggers the Ras/Raf/MEK/MAPK signaling cascade (By similarity). Activation of the PI3K/AKT pathway is responsible for most of insulin metabolic effects in the cell, and the Ras/Raf/MEK/MAPK is involved in the regulation of gene expression and in cooperation with the PI3K pathway regulates cell growth and differentiation (By similarity). Acts a positive regulator of the Wnt/beta-catenin signaling pathway through suppression of DVL2 autophagy-mediated degradation leading to cell proliferation (By similarity).</text>
</comment>
<comment type="subunit">
    <text evidence="2 3 4">Interacts with UBTF and PIK3CA (By similarity). Interacts (via phosphorylated YXXM motifs) with PIK3R1 (By similarity). Interacts with ROCK1 and FER (By similarity). Interacts (via PH domain) with PHIP (By similarity). Interacts with GRB2 (By similarity). Interacts with SOCS7. Interacts (via IRS-type PTB domain) with IGF1R and INSR (via the tyrosine-phosphorylated NPXY motif). Interacts with ALK (By similarity). Interacts with EIF2AK2/PKR (By similarity). Interacts with GKAP1 (By similarity). Interacts with DGKZ in the absence of insulin; insulin stimulation decreases this interaction (By similarity). Found in a ternary complex with DGKZ and PIP5K1A in the absence of insulin stimulation (By similarity). Interacts with SQSTM1; the interaction is disrupted by the presence of tensin TNS2. Interacts with NCK1 (via SH2 domain). Interacts with NCK2 (via SH3 domain) (By similarity). Interacts with SH2B1; this interaction enhances leptin-induced activation of the PI3-kinase pathway (By similarity). Interacts with DVL2; this interaction promotes the Wnt/beta-catenin signaling pathway (By similarity). Interacts with JAK1 (By similarity).</text>
</comment>
<comment type="subcellular location">
    <subcellularLocation>
        <location evidence="2">Cytoplasm</location>
    </subcellularLocation>
    <subcellularLocation>
        <location evidence="2">Nucleus</location>
    </subcellularLocation>
    <text evidence="2">Nuclear or cytoplasmic localization of IRS1 correlates with the transition from proliferation to chondrogenic differentiation.</text>
</comment>
<comment type="PTM">
    <text evidence="2 3 4">Serine phosphorylation of IRS1 is a mechanism for insulin resistance. Ser-312 phosphorylation inhibits insulin action through disruption of IRS1 interaction with the insulin receptor (By similarity). Phosphorylation of Tyr-905 is required for GRB2-binding (By similarity). Phosphorylated by ALK. Phosphorylated at Ser-270, Ser-307, Ser-636 and Ser-1109 by RPS6KB1; phosphorylation induces accelerated degradation of IRS1. Phosphorylated on tyrosine residues in response to insulin (By similarity). In skeletal muscles, dephosphorylated on Tyr-612 by TNS2 under anabolic conditions; dephosphorylation results in the proteasomal degradation of IRS1 (By similarity).</text>
</comment>
<comment type="PTM">
    <text evidence="2">Ubiquitinated by the Cul7-RING(FBXW8) complex in a mTOR-dependent manner, leading to its degradation: the Cul7-RING(FBXW8) complex recognizes and binds IRS1 previously phosphorylated by S6 kinase (RPS6KB1 or RPS6KB2). Ubiquitinated by TRAF4 through 'Lys-29' linkage; this ubiquitination regulates the interaction of IRS1 with IGFR and IRS1 tyrosine phosphorylation upon IGF1 stimulation (By similarity).</text>
</comment>
<comment type="PTM">
    <text evidence="2">S-nitrosylation at by BLVRB inhibits its activity.</text>
</comment>
<keyword id="KW-0963">Cytoplasm</keyword>
<keyword id="KW-1017">Isopeptide bond</keyword>
<keyword id="KW-0539">Nucleus</keyword>
<keyword id="KW-0597">Phosphoprotein</keyword>
<keyword id="KW-0677">Repeat</keyword>
<keyword id="KW-0702">S-nitrosylation</keyword>
<keyword id="KW-0807">Transducer</keyword>
<keyword id="KW-0832">Ubl conjugation</keyword>
<gene>
    <name type="primary">IRS1</name>
</gene>